<protein>
    <recommendedName>
        <fullName>Caerulein</fullName>
    </recommendedName>
</protein>
<sequence>QQDYTGWMDF</sequence>
<comment type="function">
    <text>Hypotensive neuropeptide.</text>
</comment>
<comment type="subcellular location">
    <subcellularLocation>
        <location>Secreted</location>
    </subcellularLocation>
</comment>
<comment type="tissue specificity">
    <text>Expressed by the skin dorsal glands.</text>
</comment>
<comment type="mass spectrometry"/>
<comment type="similarity">
    <text evidence="2">Belongs to the gastrin/cholecystokinin family.</text>
</comment>
<evidence type="ECO:0000269" key="1">
    <source>
    </source>
</evidence>
<evidence type="ECO:0000305" key="2"/>
<feature type="peptide" id="PRO_0000043886" description="Caerulein">
    <location>
        <begin position="1"/>
        <end position="10"/>
    </location>
</feature>
<feature type="modified residue" description="Pyrrolidone carboxylic acid" evidence="1">
    <location>
        <position position="1"/>
    </location>
</feature>
<feature type="modified residue" description="Sulfotyrosine" evidence="1">
    <location>
        <position position="4"/>
    </location>
</feature>
<feature type="modified residue" description="Phenylalanine amide" evidence="1">
    <location>
        <position position="10"/>
    </location>
</feature>
<accession>P56264</accession>
<dbReference type="GO" id="GO:0005576">
    <property type="term" value="C:extracellular region"/>
    <property type="evidence" value="ECO:0007669"/>
    <property type="project" value="UniProtKB-SubCell"/>
</dbReference>
<dbReference type="GO" id="GO:0006952">
    <property type="term" value="P:defense response"/>
    <property type="evidence" value="ECO:0007669"/>
    <property type="project" value="UniProtKB-KW"/>
</dbReference>
<dbReference type="GO" id="GO:0008217">
    <property type="term" value="P:regulation of blood pressure"/>
    <property type="evidence" value="ECO:0007669"/>
    <property type="project" value="UniProtKB-KW"/>
</dbReference>
<dbReference type="InterPro" id="IPR013152">
    <property type="entry name" value="Gastrin/cholecystokinin_CS"/>
</dbReference>
<dbReference type="PROSITE" id="PS00259">
    <property type="entry name" value="GASTRIN"/>
    <property type="match status" value="1"/>
</dbReference>
<proteinExistence type="evidence at protein level"/>
<reference key="1">
    <citation type="journal article" date="1997" name="J. Pept. Sci.">
        <title>New caerin antibacterial peptides from the skin glands of the Australian tree frog Litoria xanthomera.</title>
        <authorList>
            <person name="Steinborner S.T."/>
            <person name="Waugh R.J."/>
            <person name="Bowie J.H."/>
            <person name="Wallace J.C."/>
            <person name="Tyler M.J."/>
            <person name="Ramsay S.L."/>
        </authorList>
    </citation>
    <scope>PROTEIN SEQUENCE</scope>
    <scope>PYROGLUTAMATE FORMATION AT GLN-1</scope>
    <scope>SULFATION AT TYR-4</scope>
    <scope>AMIDATION AT PHE-10</scope>
    <scope>MASS SPECTROMETRY</scope>
    <source>
        <tissue>Skin secretion</tissue>
    </source>
</reference>
<keyword id="KW-0027">Amidation</keyword>
<keyword id="KW-0878">Amphibian defense peptide</keyword>
<keyword id="KW-0903">Direct protein sequencing</keyword>
<keyword id="KW-0382">Hypotensive agent</keyword>
<keyword id="KW-0873">Pyrrolidone carboxylic acid</keyword>
<keyword id="KW-0964">Secreted</keyword>
<keyword id="KW-0765">Sulfation</keyword>
<name>CAER_RANXA</name>
<organism>
    <name type="scientific">Ranoidea xanthomera</name>
    <name type="common">Northern orange-eyed tree frog</name>
    <name type="synonym">Litoria xanthomera</name>
    <dbReference type="NCBI Taxonomy" id="79697"/>
    <lineage>
        <taxon>Eukaryota</taxon>
        <taxon>Metazoa</taxon>
        <taxon>Chordata</taxon>
        <taxon>Craniata</taxon>
        <taxon>Vertebrata</taxon>
        <taxon>Euteleostomi</taxon>
        <taxon>Amphibia</taxon>
        <taxon>Batrachia</taxon>
        <taxon>Anura</taxon>
        <taxon>Neobatrachia</taxon>
        <taxon>Hyloidea</taxon>
        <taxon>Hylidae</taxon>
        <taxon>Pelodryadinae</taxon>
        <taxon>Litoria</taxon>
    </lineage>
</organism>